<name>Y2319_MYCTU</name>
<gene>
    <name type="ordered locus">Rv2319c</name>
    <name type="ORF">MTCY3G12.15</name>
</gene>
<reference key="1">
    <citation type="journal article" date="1998" name="Nature">
        <title>Deciphering the biology of Mycobacterium tuberculosis from the complete genome sequence.</title>
        <authorList>
            <person name="Cole S.T."/>
            <person name="Brosch R."/>
            <person name="Parkhill J."/>
            <person name="Garnier T."/>
            <person name="Churcher C.M."/>
            <person name="Harris D.E."/>
            <person name="Gordon S.V."/>
            <person name="Eiglmeier K."/>
            <person name="Gas S."/>
            <person name="Barry C.E. III"/>
            <person name="Tekaia F."/>
            <person name="Badcock K."/>
            <person name="Basham D."/>
            <person name="Brown D."/>
            <person name="Chillingworth T."/>
            <person name="Connor R."/>
            <person name="Davies R.M."/>
            <person name="Devlin K."/>
            <person name="Feltwell T."/>
            <person name="Gentles S."/>
            <person name="Hamlin N."/>
            <person name="Holroyd S."/>
            <person name="Hornsby T."/>
            <person name="Jagels K."/>
            <person name="Krogh A."/>
            <person name="McLean J."/>
            <person name="Moule S."/>
            <person name="Murphy L.D."/>
            <person name="Oliver S."/>
            <person name="Osborne J."/>
            <person name="Quail M.A."/>
            <person name="Rajandream M.A."/>
            <person name="Rogers J."/>
            <person name="Rutter S."/>
            <person name="Seeger K."/>
            <person name="Skelton S."/>
            <person name="Squares S."/>
            <person name="Squares R."/>
            <person name="Sulston J.E."/>
            <person name="Taylor K."/>
            <person name="Whitehead S."/>
            <person name="Barrell B.G."/>
        </authorList>
    </citation>
    <scope>NUCLEOTIDE SEQUENCE [LARGE SCALE GENOMIC DNA]</scope>
    <source>
        <strain>ATCC 25618 / H37Rv</strain>
    </source>
</reference>
<reference key="2">
    <citation type="journal article" date="2008" name="BMC Syst. Biol.">
        <title>targetTB: a target identification pipeline for Mycobacterium tuberculosis through an interactome, reactome and genome-scale structural analysis.</title>
        <authorList>
            <person name="Raman K."/>
            <person name="Yeturu K."/>
            <person name="Chandra N."/>
        </authorList>
    </citation>
    <scope>IDENTIFICATION AS A DRUG TARGET [LARGE SCALE ANALYSIS]</scope>
</reference>
<reference key="3">
    <citation type="journal article" date="2011" name="Mol. Cell. Proteomics">
        <title>Proteogenomic analysis of Mycobacterium tuberculosis by high resolution mass spectrometry.</title>
        <authorList>
            <person name="Kelkar D.S."/>
            <person name="Kumar D."/>
            <person name="Kumar P."/>
            <person name="Balakrishnan L."/>
            <person name="Muthusamy B."/>
            <person name="Yadav A.K."/>
            <person name="Shrivastava P."/>
            <person name="Marimuthu A."/>
            <person name="Anand S."/>
            <person name="Sundaram H."/>
            <person name="Kingsbury R."/>
            <person name="Harsha H.C."/>
            <person name="Nair B."/>
            <person name="Prasad T.S."/>
            <person name="Chauhan D.S."/>
            <person name="Katoch K."/>
            <person name="Katoch V.M."/>
            <person name="Kumar P."/>
            <person name="Chaerkady R."/>
            <person name="Ramachandran S."/>
            <person name="Dash D."/>
            <person name="Pandey A."/>
        </authorList>
    </citation>
    <scope>IDENTIFICATION BY MASS SPECTROMETRY [LARGE SCALE ANALYSIS]</scope>
    <source>
        <strain>ATCC 25618 / H37Rv</strain>
    </source>
</reference>
<proteinExistence type="evidence at protein level"/>
<comment type="miscellaneous">
    <text>Was identified as a high-confidence drug target.</text>
</comment>
<comment type="similarity">
    <text evidence="1">Belongs to the universal stress protein A family.</text>
</comment>
<feature type="chain" id="PRO_0000104026" description="Universal stress protein Rv2319c">
    <location>
        <begin position="1"/>
        <end position="292"/>
    </location>
</feature>
<accession>P9WLB5</accession>
<accession>L0TC63</accession>
<accession>P64995</accession>
<accession>P71893</accession>
<dbReference type="EMBL" id="AL123456">
    <property type="protein sequence ID" value="CCP45106.1"/>
    <property type="molecule type" value="Genomic_DNA"/>
</dbReference>
<dbReference type="PIR" id="H70703">
    <property type="entry name" value="H70703"/>
</dbReference>
<dbReference type="RefSeq" id="NP_216835.1">
    <property type="nucleotide sequence ID" value="NC_000962.3"/>
</dbReference>
<dbReference type="RefSeq" id="WP_003411952.1">
    <property type="nucleotide sequence ID" value="NZ_NVQJ01000012.1"/>
</dbReference>
<dbReference type="SMR" id="P9WLB5"/>
<dbReference type="STRING" id="83332.Rv2319c"/>
<dbReference type="PaxDb" id="83332-Rv2319c"/>
<dbReference type="DNASU" id="885171"/>
<dbReference type="GeneID" id="885171"/>
<dbReference type="KEGG" id="mtu:Rv2319c"/>
<dbReference type="KEGG" id="mtv:RVBD_2319c"/>
<dbReference type="TubercuList" id="Rv2319c"/>
<dbReference type="eggNOG" id="COG0589">
    <property type="taxonomic scope" value="Bacteria"/>
</dbReference>
<dbReference type="InParanoid" id="P9WLB5"/>
<dbReference type="OrthoDB" id="5242641at2"/>
<dbReference type="Proteomes" id="UP000001584">
    <property type="component" value="Chromosome"/>
</dbReference>
<dbReference type="CDD" id="cd00293">
    <property type="entry name" value="USP-like"/>
    <property type="match status" value="2"/>
</dbReference>
<dbReference type="Gene3D" id="3.40.50.12370">
    <property type="match status" value="1"/>
</dbReference>
<dbReference type="InterPro" id="IPR006015">
    <property type="entry name" value="Universal_stress_UspA"/>
</dbReference>
<dbReference type="InterPro" id="IPR051688">
    <property type="entry name" value="USP_A"/>
</dbReference>
<dbReference type="InterPro" id="IPR006016">
    <property type="entry name" value="UspA"/>
</dbReference>
<dbReference type="PANTHER" id="PTHR43010">
    <property type="entry name" value="UNIVERSAL STRESS PROTEIN SLR1230"/>
    <property type="match status" value="1"/>
</dbReference>
<dbReference type="PANTHER" id="PTHR43010:SF1">
    <property type="entry name" value="USPA DOMAIN-CONTAINING PROTEIN"/>
    <property type="match status" value="1"/>
</dbReference>
<dbReference type="Pfam" id="PF00582">
    <property type="entry name" value="Usp"/>
    <property type="match status" value="2"/>
</dbReference>
<dbReference type="PRINTS" id="PR01438">
    <property type="entry name" value="UNVRSLSTRESS"/>
</dbReference>
<dbReference type="SUPFAM" id="SSF52402">
    <property type="entry name" value="Adenine nucleotide alpha hydrolases-like"/>
    <property type="match status" value="2"/>
</dbReference>
<sequence>MTIVVGYLAGKVGPSALHLAVRVARMHKTSLTVATIVRRHWPTPSLARVDAEYELWSEQLAAASAREAQRYLRRLADGIEVSYHHRAHRSVSAGLLDVVEELEAEVLVLGSFPSGRRARVLIGSTADRLLHSSPVPVAITPRRYRCYTDRLTRLSCGYSATSGSVDVVRRCGHLASRYGVPMRVITFAVRGRTMYPPEVGLHAEASVLEAWAAQARELLEKLRINGVVSEDVVLQVVTGNGWAQALDAADWQDGEILALGTSPFGDVARVFLGSWSGKIIRYSPVPVLVLPG</sequence>
<organism>
    <name type="scientific">Mycobacterium tuberculosis (strain ATCC 25618 / H37Rv)</name>
    <dbReference type="NCBI Taxonomy" id="83332"/>
    <lineage>
        <taxon>Bacteria</taxon>
        <taxon>Bacillati</taxon>
        <taxon>Actinomycetota</taxon>
        <taxon>Actinomycetes</taxon>
        <taxon>Mycobacteriales</taxon>
        <taxon>Mycobacteriaceae</taxon>
        <taxon>Mycobacterium</taxon>
        <taxon>Mycobacterium tuberculosis complex</taxon>
    </lineage>
</organism>
<evidence type="ECO:0000305" key="1"/>
<keyword id="KW-1185">Reference proteome</keyword>
<protein>
    <recommendedName>
        <fullName>Universal stress protein Rv2319c</fullName>
        <shortName>USP Rv2319c</shortName>
    </recommendedName>
</protein>